<reference key="1">
    <citation type="journal article" date="2007" name="Nat. Biotechnol.">
        <title>Genome sequence and identification of candidate vaccine antigens from the animal pathogen Dichelobacter nodosus.</title>
        <authorList>
            <person name="Myers G.S.A."/>
            <person name="Parker D."/>
            <person name="Al-Hasani K."/>
            <person name="Kennan R.M."/>
            <person name="Seemann T."/>
            <person name="Ren Q."/>
            <person name="Badger J.H."/>
            <person name="Selengut J.D."/>
            <person name="Deboy R.T."/>
            <person name="Tettelin H."/>
            <person name="Boyce J.D."/>
            <person name="McCarl V.P."/>
            <person name="Han X."/>
            <person name="Nelson W.C."/>
            <person name="Madupu R."/>
            <person name="Mohamoud Y."/>
            <person name="Holley T."/>
            <person name="Fedorova N."/>
            <person name="Khouri H."/>
            <person name="Bottomley S.P."/>
            <person name="Whittington R.J."/>
            <person name="Adler B."/>
            <person name="Songer J.G."/>
            <person name="Rood J.I."/>
            <person name="Paulsen I.T."/>
        </authorList>
    </citation>
    <scope>NUCLEOTIDE SEQUENCE [LARGE SCALE GENOMIC DNA]</scope>
    <source>
        <strain>VCS1703A</strain>
    </source>
</reference>
<protein>
    <recommendedName>
        <fullName evidence="1">Small ribosomal subunit biogenesis GTPase RsgA</fullName>
        <ecNumber evidence="1">3.6.1.-</ecNumber>
    </recommendedName>
</protein>
<comment type="function">
    <text evidence="1">One of several proteins that assist in the late maturation steps of the functional core of the 30S ribosomal subunit. Helps release RbfA from mature subunits. May play a role in the assembly of ribosomal proteins into the subunit. Circularly permuted GTPase that catalyzes slow GTP hydrolysis, GTPase activity is stimulated by the 30S ribosomal subunit.</text>
</comment>
<comment type="cofactor">
    <cofactor evidence="1">
        <name>Zn(2+)</name>
        <dbReference type="ChEBI" id="CHEBI:29105"/>
    </cofactor>
    <text evidence="1">Binds 1 zinc ion per subunit.</text>
</comment>
<comment type="subunit">
    <text evidence="1">Monomer. Associates with 30S ribosomal subunit, binds 16S rRNA.</text>
</comment>
<comment type="subcellular location">
    <subcellularLocation>
        <location evidence="1">Cytoplasm</location>
    </subcellularLocation>
</comment>
<comment type="similarity">
    <text evidence="1">Belongs to the TRAFAC class YlqF/YawG GTPase family. RsgA subfamily.</text>
</comment>
<sequence length="316" mass="35746">MSKLSHQQQRRIHNHRQNKLAAGDRADAALVVAHLGYQLIVDDHGEILAADWRQKLGAIAVNDRVLITRDQPQHAIVEGIYPREKTLYKQHAGKLKPVASNIDQLLITFAPVPDWQNALLDRFLVAAHQAHIEPAFFCNKSDLFDAQTFAAAENRLAIYHQLGYRVFYGSIYQKTGLEELTHWLSGRQTVICGQSGVGKSSFIHYLMPDIDVWTQAVSAARGFGQHTTRNARRYPLDAHTAIIDTPGVRGFSLTHLQHSEVVSGFPEIHQYTHECRFNDCSHQHEPDCGVQRALERGDISLERFNSMMQICAEREV</sequence>
<name>RSGA_DICNV</name>
<gene>
    <name evidence="1" type="primary">rsgA</name>
    <name type="ordered locus">DNO_0649</name>
</gene>
<accession>A5EV96</accession>
<evidence type="ECO:0000255" key="1">
    <source>
        <dbReference type="HAMAP-Rule" id="MF_01820"/>
    </source>
</evidence>
<evidence type="ECO:0000255" key="2">
    <source>
        <dbReference type="PROSITE-ProRule" id="PRU01058"/>
    </source>
</evidence>
<evidence type="ECO:0000256" key="3">
    <source>
        <dbReference type="SAM" id="MobiDB-lite"/>
    </source>
</evidence>
<dbReference type="EC" id="3.6.1.-" evidence="1"/>
<dbReference type="EMBL" id="CP000513">
    <property type="protein sequence ID" value="ABQ13087.1"/>
    <property type="molecule type" value="Genomic_DNA"/>
</dbReference>
<dbReference type="RefSeq" id="WP_012030982.1">
    <property type="nucleotide sequence ID" value="NC_009446.1"/>
</dbReference>
<dbReference type="SMR" id="A5EV96"/>
<dbReference type="STRING" id="246195.DNO_0649"/>
<dbReference type="KEGG" id="dno:DNO_0649"/>
<dbReference type="eggNOG" id="COG1162">
    <property type="taxonomic scope" value="Bacteria"/>
</dbReference>
<dbReference type="HOGENOM" id="CLU_033617_2_0_6"/>
<dbReference type="OrthoDB" id="9809485at2"/>
<dbReference type="Proteomes" id="UP000000248">
    <property type="component" value="Chromosome"/>
</dbReference>
<dbReference type="GO" id="GO:0005737">
    <property type="term" value="C:cytoplasm"/>
    <property type="evidence" value="ECO:0007669"/>
    <property type="project" value="UniProtKB-SubCell"/>
</dbReference>
<dbReference type="GO" id="GO:0005525">
    <property type="term" value="F:GTP binding"/>
    <property type="evidence" value="ECO:0007669"/>
    <property type="project" value="UniProtKB-UniRule"/>
</dbReference>
<dbReference type="GO" id="GO:0003924">
    <property type="term" value="F:GTPase activity"/>
    <property type="evidence" value="ECO:0007669"/>
    <property type="project" value="UniProtKB-UniRule"/>
</dbReference>
<dbReference type="GO" id="GO:0046872">
    <property type="term" value="F:metal ion binding"/>
    <property type="evidence" value="ECO:0007669"/>
    <property type="project" value="UniProtKB-KW"/>
</dbReference>
<dbReference type="GO" id="GO:0019843">
    <property type="term" value="F:rRNA binding"/>
    <property type="evidence" value="ECO:0007669"/>
    <property type="project" value="UniProtKB-KW"/>
</dbReference>
<dbReference type="GO" id="GO:0042274">
    <property type="term" value="P:ribosomal small subunit biogenesis"/>
    <property type="evidence" value="ECO:0007669"/>
    <property type="project" value="UniProtKB-UniRule"/>
</dbReference>
<dbReference type="CDD" id="cd01854">
    <property type="entry name" value="YjeQ_EngC"/>
    <property type="match status" value="1"/>
</dbReference>
<dbReference type="Gene3D" id="3.40.50.300">
    <property type="entry name" value="P-loop containing nucleotide triphosphate hydrolases"/>
    <property type="match status" value="1"/>
</dbReference>
<dbReference type="Gene3D" id="1.10.40.50">
    <property type="entry name" value="Probable gtpase engc, domain 3"/>
    <property type="match status" value="1"/>
</dbReference>
<dbReference type="HAMAP" id="MF_01820">
    <property type="entry name" value="GTPase_RsgA"/>
    <property type="match status" value="1"/>
</dbReference>
<dbReference type="InterPro" id="IPR030378">
    <property type="entry name" value="G_CP_dom"/>
</dbReference>
<dbReference type="InterPro" id="IPR027417">
    <property type="entry name" value="P-loop_NTPase"/>
</dbReference>
<dbReference type="InterPro" id="IPR004881">
    <property type="entry name" value="Ribosome_biogen_GTPase_RsgA"/>
</dbReference>
<dbReference type="InterPro" id="IPR010914">
    <property type="entry name" value="RsgA_GTPase_dom"/>
</dbReference>
<dbReference type="NCBIfam" id="TIGR00157">
    <property type="entry name" value="ribosome small subunit-dependent GTPase A"/>
    <property type="match status" value="1"/>
</dbReference>
<dbReference type="PANTHER" id="PTHR32120">
    <property type="entry name" value="SMALL RIBOSOMAL SUBUNIT BIOGENESIS GTPASE RSGA"/>
    <property type="match status" value="1"/>
</dbReference>
<dbReference type="PANTHER" id="PTHR32120:SF11">
    <property type="entry name" value="SMALL RIBOSOMAL SUBUNIT BIOGENESIS GTPASE RSGA 1, MITOCHONDRIAL-RELATED"/>
    <property type="match status" value="1"/>
</dbReference>
<dbReference type="Pfam" id="PF03193">
    <property type="entry name" value="RsgA_GTPase"/>
    <property type="match status" value="1"/>
</dbReference>
<dbReference type="SUPFAM" id="SSF52540">
    <property type="entry name" value="P-loop containing nucleoside triphosphate hydrolases"/>
    <property type="match status" value="1"/>
</dbReference>
<dbReference type="PROSITE" id="PS50936">
    <property type="entry name" value="ENGC_GTPASE"/>
    <property type="match status" value="1"/>
</dbReference>
<dbReference type="PROSITE" id="PS51721">
    <property type="entry name" value="G_CP"/>
    <property type="match status" value="1"/>
</dbReference>
<organism>
    <name type="scientific">Dichelobacter nodosus (strain VCS1703A)</name>
    <dbReference type="NCBI Taxonomy" id="246195"/>
    <lineage>
        <taxon>Bacteria</taxon>
        <taxon>Pseudomonadati</taxon>
        <taxon>Pseudomonadota</taxon>
        <taxon>Gammaproteobacteria</taxon>
        <taxon>Cardiobacteriales</taxon>
        <taxon>Cardiobacteriaceae</taxon>
        <taxon>Dichelobacter</taxon>
    </lineage>
</organism>
<proteinExistence type="inferred from homology"/>
<keyword id="KW-0963">Cytoplasm</keyword>
<keyword id="KW-0342">GTP-binding</keyword>
<keyword id="KW-0378">Hydrolase</keyword>
<keyword id="KW-0479">Metal-binding</keyword>
<keyword id="KW-0547">Nucleotide-binding</keyword>
<keyword id="KW-1185">Reference proteome</keyword>
<keyword id="KW-0690">Ribosome biogenesis</keyword>
<keyword id="KW-0694">RNA-binding</keyword>
<keyword id="KW-0699">rRNA-binding</keyword>
<keyword id="KW-0862">Zinc</keyword>
<feature type="chain" id="PRO_1000188060" description="Small ribosomal subunit biogenesis GTPase RsgA">
    <location>
        <begin position="1"/>
        <end position="316"/>
    </location>
</feature>
<feature type="domain" description="CP-type G" evidence="2">
    <location>
        <begin position="92"/>
        <end position="251"/>
    </location>
</feature>
<feature type="region of interest" description="Disordered" evidence="3">
    <location>
        <begin position="1"/>
        <end position="20"/>
    </location>
</feature>
<feature type="compositionally biased region" description="Basic residues" evidence="3">
    <location>
        <begin position="8"/>
        <end position="18"/>
    </location>
</feature>
<feature type="binding site" evidence="1">
    <location>
        <begin position="139"/>
        <end position="142"/>
    </location>
    <ligand>
        <name>GTP</name>
        <dbReference type="ChEBI" id="CHEBI:37565"/>
    </ligand>
</feature>
<feature type="binding site" evidence="1">
    <location>
        <begin position="193"/>
        <end position="201"/>
    </location>
    <ligand>
        <name>GTP</name>
        <dbReference type="ChEBI" id="CHEBI:37565"/>
    </ligand>
</feature>
<feature type="binding site" evidence="1">
    <location>
        <position position="275"/>
    </location>
    <ligand>
        <name>Zn(2+)</name>
        <dbReference type="ChEBI" id="CHEBI:29105"/>
    </ligand>
</feature>
<feature type="binding site" evidence="1">
    <location>
        <position position="280"/>
    </location>
    <ligand>
        <name>Zn(2+)</name>
        <dbReference type="ChEBI" id="CHEBI:29105"/>
    </ligand>
</feature>
<feature type="binding site" evidence="1">
    <location>
        <position position="282"/>
    </location>
    <ligand>
        <name>Zn(2+)</name>
        <dbReference type="ChEBI" id="CHEBI:29105"/>
    </ligand>
</feature>
<feature type="binding site" evidence="1">
    <location>
        <position position="288"/>
    </location>
    <ligand>
        <name>Zn(2+)</name>
        <dbReference type="ChEBI" id="CHEBI:29105"/>
    </ligand>
</feature>